<organism>
    <name type="scientific">Oryza sativa subsp. japonica</name>
    <name type="common">Rice</name>
    <dbReference type="NCBI Taxonomy" id="39947"/>
    <lineage>
        <taxon>Eukaryota</taxon>
        <taxon>Viridiplantae</taxon>
        <taxon>Streptophyta</taxon>
        <taxon>Embryophyta</taxon>
        <taxon>Tracheophyta</taxon>
        <taxon>Spermatophyta</taxon>
        <taxon>Magnoliopsida</taxon>
        <taxon>Liliopsida</taxon>
        <taxon>Poales</taxon>
        <taxon>Poaceae</taxon>
        <taxon>BOP clade</taxon>
        <taxon>Oryzoideae</taxon>
        <taxon>Oryzeae</taxon>
        <taxon>Oryzinae</taxon>
        <taxon>Oryza</taxon>
        <taxon>Oryza sativa</taxon>
    </lineage>
</organism>
<proteinExistence type="evidence at transcript level"/>
<feature type="chain" id="PRO_0000407571" description="Probable glucuronosyltransferase Os03g0107900">
    <location>
        <begin position="1"/>
        <end position="427"/>
    </location>
</feature>
<feature type="topological domain" description="Cytoplasmic" evidence="2">
    <location>
        <begin position="1"/>
        <end position="33"/>
    </location>
</feature>
<feature type="transmembrane region" description="Helical; Signal-anchor for type II membrane protein" evidence="2">
    <location>
        <begin position="34"/>
        <end position="54"/>
    </location>
</feature>
<feature type="topological domain" description="Lumenal" evidence="2">
    <location>
        <begin position="55"/>
        <end position="427"/>
    </location>
</feature>
<feature type="glycosylation site" description="N-linked (GlcNAc...) asparagine" evidence="2">
    <location>
        <position position="136"/>
    </location>
</feature>
<feature type="glycosylation site" description="N-linked (GlcNAc...) asparagine" evidence="2">
    <location>
        <position position="168"/>
    </location>
</feature>
<feature type="glycosylation site" description="N-linked (GlcNAc...) asparagine" evidence="2">
    <location>
        <position position="264"/>
    </location>
</feature>
<feature type="glycosylation site" description="N-linked (GlcNAc...) asparagine" evidence="2">
    <location>
        <position position="374"/>
    </location>
</feature>
<name>GT31_ORYSJ</name>
<comment type="function">
    <text evidence="1">Involved in the synthesis of glucuronoxylan hemicellulose in secondary cell walls.</text>
</comment>
<comment type="subcellular location">
    <subcellularLocation>
        <location evidence="1">Golgi apparatus membrane</location>
        <topology evidence="1">Single-pass type II membrane protein</topology>
    </subcellularLocation>
</comment>
<comment type="similarity">
    <text evidence="3">Belongs to the glycosyltransferase 47 family.</text>
</comment>
<accession>Q10SX7</accession>
<accession>A0A0P0VSC3</accession>
<reference key="1">
    <citation type="journal article" date="2005" name="Genome Res.">
        <title>Sequence, annotation, and analysis of synteny between rice chromosome 3 and diverged grass species.</title>
        <authorList>
            <consortium name="The rice chromosome 3 sequencing consortium"/>
            <person name="Buell C.R."/>
            <person name="Yuan Q."/>
            <person name="Ouyang S."/>
            <person name="Liu J."/>
            <person name="Zhu W."/>
            <person name="Wang A."/>
            <person name="Maiti R."/>
            <person name="Haas B."/>
            <person name="Wortman J."/>
            <person name="Pertea M."/>
            <person name="Jones K.M."/>
            <person name="Kim M."/>
            <person name="Overton L."/>
            <person name="Tsitrin T."/>
            <person name="Fadrosh D."/>
            <person name="Bera J."/>
            <person name="Weaver B."/>
            <person name="Jin S."/>
            <person name="Johri S."/>
            <person name="Reardon M."/>
            <person name="Webb K."/>
            <person name="Hill J."/>
            <person name="Moffat K."/>
            <person name="Tallon L."/>
            <person name="Van Aken S."/>
            <person name="Lewis M."/>
            <person name="Utterback T."/>
            <person name="Feldblyum T."/>
            <person name="Zismann V."/>
            <person name="Iobst S."/>
            <person name="Hsiao J."/>
            <person name="de Vazeille A.R."/>
            <person name="Salzberg S.L."/>
            <person name="White O."/>
            <person name="Fraser C.M."/>
            <person name="Yu Y."/>
            <person name="Kim H."/>
            <person name="Rambo T."/>
            <person name="Currie J."/>
            <person name="Collura K."/>
            <person name="Kernodle-Thompson S."/>
            <person name="Wei F."/>
            <person name="Kudrna K."/>
            <person name="Ammiraju J.S.S."/>
            <person name="Luo M."/>
            <person name="Goicoechea J.L."/>
            <person name="Wing R.A."/>
            <person name="Henry D."/>
            <person name="Oates R."/>
            <person name="Palmer M."/>
            <person name="Pries G."/>
            <person name="Saski C."/>
            <person name="Simmons J."/>
            <person name="Soderlund C."/>
            <person name="Nelson W."/>
            <person name="de la Bastide M."/>
            <person name="Spiegel L."/>
            <person name="Nascimento L."/>
            <person name="Huang E."/>
            <person name="Preston R."/>
            <person name="Zutavern T."/>
            <person name="Palmer L."/>
            <person name="O'Shaughnessy A."/>
            <person name="Dike S."/>
            <person name="McCombie W.R."/>
            <person name="Minx P."/>
            <person name="Cordum H."/>
            <person name="Wilson R."/>
            <person name="Jin W."/>
            <person name="Lee H.R."/>
            <person name="Jiang J."/>
            <person name="Jackson S."/>
        </authorList>
    </citation>
    <scope>NUCLEOTIDE SEQUENCE [LARGE SCALE GENOMIC DNA]</scope>
    <source>
        <strain>cv. Nipponbare</strain>
    </source>
</reference>
<reference key="2">
    <citation type="journal article" date="2005" name="Nature">
        <title>The map-based sequence of the rice genome.</title>
        <authorList>
            <consortium name="International rice genome sequencing project (IRGSP)"/>
        </authorList>
    </citation>
    <scope>NUCLEOTIDE SEQUENCE [LARGE SCALE GENOMIC DNA]</scope>
    <source>
        <strain>cv. Nipponbare</strain>
    </source>
</reference>
<reference key="3">
    <citation type="journal article" date="2008" name="Nucleic Acids Res.">
        <title>The rice annotation project database (RAP-DB): 2008 update.</title>
        <authorList>
            <consortium name="The rice annotation project (RAP)"/>
        </authorList>
    </citation>
    <scope>GENOME REANNOTATION</scope>
    <source>
        <strain>cv. Nipponbare</strain>
    </source>
</reference>
<reference key="4">
    <citation type="journal article" date="2013" name="Rice">
        <title>Improvement of the Oryza sativa Nipponbare reference genome using next generation sequence and optical map data.</title>
        <authorList>
            <person name="Kawahara Y."/>
            <person name="de la Bastide M."/>
            <person name="Hamilton J.P."/>
            <person name="Kanamori H."/>
            <person name="McCombie W.R."/>
            <person name="Ouyang S."/>
            <person name="Schwartz D.C."/>
            <person name="Tanaka T."/>
            <person name="Wu J."/>
            <person name="Zhou S."/>
            <person name="Childs K.L."/>
            <person name="Davidson R.M."/>
            <person name="Lin H."/>
            <person name="Quesada-Ocampo L."/>
            <person name="Vaillancourt B."/>
            <person name="Sakai H."/>
            <person name="Lee S.S."/>
            <person name="Kim J."/>
            <person name="Numa H."/>
            <person name="Itoh T."/>
            <person name="Buell C.R."/>
            <person name="Matsumoto T."/>
        </authorList>
    </citation>
    <scope>GENOME REANNOTATION</scope>
    <source>
        <strain>cv. Nipponbare</strain>
    </source>
</reference>
<reference key="5">
    <citation type="journal article" date="2005" name="PLoS Biol.">
        <title>The genomes of Oryza sativa: a history of duplications.</title>
        <authorList>
            <person name="Yu J."/>
            <person name="Wang J."/>
            <person name="Lin W."/>
            <person name="Li S."/>
            <person name="Li H."/>
            <person name="Zhou J."/>
            <person name="Ni P."/>
            <person name="Dong W."/>
            <person name="Hu S."/>
            <person name="Zeng C."/>
            <person name="Zhang J."/>
            <person name="Zhang Y."/>
            <person name="Li R."/>
            <person name="Xu Z."/>
            <person name="Li S."/>
            <person name="Li X."/>
            <person name="Zheng H."/>
            <person name="Cong L."/>
            <person name="Lin L."/>
            <person name="Yin J."/>
            <person name="Geng J."/>
            <person name="Li G."/>
            <person name="Shi J."/>
            <person name="Liu J."/>
            <person name="Lv H."/>
            <person name="Li J."/>
            <person name="Wang J."/>
            <person name="Deng Y."/>
            <person name="Ran L."/>
            <person name="Shi X."/>
            <person name="Wang X."/>
            <person name="Wu Q."/>
            <person name="Li C."/>
            <person name="Ren X."/>
            <person name="Wang J."/>
            <person name="Wang X."/>
            <person name="Li D."/>
            <person name="Liu D."/>
            <person name="Zhang X."/>
            <person name="Ji Z."/>
            <person name="Zhao W."/>
            <person name="Sun Y."/>
            <person name="Zhang Z."/>
            <person name="Bao J."/>
            <person name="Han Y."/>
            <person name="Dong L."/>
            <person name="Ji J."/>
            <person name="Chen P."/>
            <person name="Wu S."/>
            <person name="Liu J."/>
            <person name="Xiao Y."/>
            <person name="Bu D."/>
            <person name="Tan J."/>
            <person name="Yang L."/>
            <person name="Ye C."/>
            <person name="Zhang J."/>
            <person name="Xu J."/>
            <person name="Zhou Y."/>
            <person name="Yu Y."/>
            <person name="Zhang B."/>
            <person name="Zhuang S."/>
            <person name="Wei H."/>
            <person name="Liu B."/>
            <person name="Lei M."/>
            <person name="Yu H."/>
            <person name="Li Y."/>
            <person name="Xu H."/>
            <person name="Wei S."/>
            <person name="He X."/>
            <person name="Fang L."/>
            <person name="Zhang Z."/>
            <person name="Zhang Y."/>
            <person name="Huang X."/>
            <person name="Su Z."/>
            <person name="Tong W."/>
            <person name="Li J."/>
            <person name="Tong Z."/>
            <person name="Li S."/>
            <person name="Ye J."/>
            <person name="Wang L."/>
            <person name="Fang L."/>
            <person name="Lei T."/>
            <person name="Chen C.-S."/>
            <person name="Chen H.-C."/>
            <person name="Xu Z."/>
            <person name="Li H."/>
            <person name="Huang H."/>
            <person name="Zhang F."/>
            <person name="Xu H."/>
            <person name="Li N."/>
            <person name="Zhao C."/>
            <person name="Li S."/>
            <person name="Dong L."/>
            <person name="Huang Y."/>
            <person name="Li L."/>
            <person name="Xi Y."/>
            <person name="Qi Q."/>
            <person name="Li W."/>
            <person name="Zhang B."/>
            <person name="Hu W."/>
            <person name="Zhang Y."/>
            <person name="Tian X."/>
            <person name="Jiao Y."/>
            <person name="Liang X."/>
            <person name="Jin J."/>
            <person name="Gao L."/>
            <person name="Zheng W."/>
            <person name="Hao B."/>
            <person name="Liu S.-M."/>
            <person name="Wang W."/>
            <person name="Yuan L."/>
            <person name="Cao M."/>
            <person name="McDermott J."/>
            <person name="Samudrala R."/>
            <person name="Wang J."/>
            <person name="Wong G.K.-S."/>
            <person name="Yang H."/>
        </authorList>
    </citation>
    <scope>NUCLEOTIDE SEQUENCE [LARGE SCALE GENOMIC DNA]</scope>
    <source>
        <strain>cv. Nipponbare</strain>
    </source>
</reference>
<reference key="6">
    <citation type="journal article" date="2003" name="Science">
        <title>Collection, mapping, and annotation of over 28,000 cDNA clones from japonica rice.</title>
        <authorList>
            <consortium name="The rice full-length cDNA consortium"/>
        </authorList>
    </citation>
    <scope>NUCLEOTIDE SEQUENCE [LARGE SCALE MRNA]</scope>
    <source>
        <strain>cv. Nipponbare</strain>
    </source>
</reference>
<sequence>MAMRGDPKQRRASASAPHGGAAHHVADKLRRHSTFLLLLLLLWFALSLYLFLSATPPPPRPAFLPSTSTPRPALRIYVYDLPARFNRHWVAADARCATHLFAAEVALHEALLAYAGRAARPDDATLFFVPVYVSCNFSTDNGFPSLSHARALLADAVDLVRAQMPYWNRSAGADHVFVASHDFGACFHPMEDVAIADGIPEFLKRSILLQTFGVQGTHVCQEADHVVIPPHVPPEVALELPEPEKAQRDIFAFFRGKMEVHPKNISGRFYSKKVRTELLQKYGRNRKFYLKRKRYGNYRSEMARSLFCLCPLGWAPWSPRLVESVLLGCIPVIIADDIRLPFPSVLQWLDISLQVAEKDVASLEMVLDHVVATNLTVIQKNLWDPVKRKALVFNRPMEEGDATWQVLRELEILLDRSQRRHVESWKR</sequence>
<keyword id="KW-0961">Cell wall biogenesis/degradation</keyword>
<keyword id="KW-0325">Glycoprotein</keyword>
<keyword id="KW-0328">Glycosyltransferase</keyword>
<keyword id="KW-0333">Golgi apparatus</keyword>
<keyword id="KW-0472">Membrane</keyword>
<keyword id="KW-1185">Reference proteome</keyword>
<keyword id="KW-0735">Signal-anchor</keyword>
<keyword id="KW-0808">Transferase</keyword>
<keyword id="KW-0812">Transmembrane</keyword>
<keyword id="KW-1133">Transmembrane helix</keyword>
<evidence type="ECO:0000250" key="1"/>
<evidence type="ECO:0000255" key="2"/>
<evidence type="ECO:0000305" key="3"/>
<dbReference type="EC" id="2.4.-.-"/>
<dbReference type="EMBL" id="DP000009">
    <property type="protein sequence ID" value="ABF93559.1"/>
    <property type="molecule type" value="Genomic_DNA"/>
</dbReference>
<dbReference type="EMBL" id="AP008209">
    <property type="protein sequence ID" value="BAF10611.1"/>
    <property type="molecule type" value="Genomic_DNA"/>
</dbReference>
<dbReference type="EMBL" id="AP014959">
    <property type="protein sequence ID" value="BAS81890.1"/>
    <property type="molecule type" value="Genomic_DNA"/>
</dbReference>
<dbReference type="EMBL" id="CM000140">
    <property type="protein sequence ID" value="EEE58174.1"/>
    <property type="molecule type" value="Genomic_DNA"/>
</dbReference>
<dbReference type="EMBL" id="AK109533">
    <property type="protein sequence ID" value="BAG98793.1"/>
    <property type="molecule type" value="mRNA"/>
</dbReference>
<dbReference type="SMR" id="Q10SX7"/>
<dbReference type="FunCoup" id="Q10SX7">
    <property type="interactions" value="92"/>
</dbReference>
<dbReference type="STRING" id="39947.Q10SX7"/>
<dbReference type="CAZy" id="GT47">
    <property type="family name" value="Glycosyltransferase Family 47"/>
</dbReference>
<dbReference type="PaxDb" id="39947-Q10SX7"/>
<dbReference type="EnsemblPlants" id="Os03t0107900-01">
    <property type="protein sequence ID" value="Os03t0107900-01"/>
    <property type="gene ID" value="Os03g0107900"/>
</dbReference>
<dbReference type="Gramene" id="Os03t0107900-01">
    <property type="protein sequence ID" value="Os03t0107900-01"/>
    <property type="gene ID" value="Os03g0107900"/>
</dbReference>
<dbReference type="KEGG" id="dosa:Os03g0107900"/>
<dbReference type="eggNOG" id="KOG1021">
    <property type="taxonomic scope" value="Eukaryota"/>
</dbReference>
<dbReference type="HOGENOM" id="CLU_039682_1_0_1"/>
<dbReference type="InParanoid" id="Q10SX7"/>
<dbReference type="OMA" id="VCQEVEH"/>
<dbReference type="Proteomes" id="UP000000763">
    <property type="component" value="Chromosome 3"/>
</dbReference>
<dbReference type="Proteomes" id="UP000007752">
    <property type="component" value="Chromosome 3"/>
</dbReference>
<dbReference type="Proteomes" id="UP000059680">
    <property type="component" value="Chromosome 3"/>
</dbReference>
<dbReference type="GO" id="GO:0000139">
    <property type="term" value="C:Golgi membrane"/>
    <property type="evidence" value="ECO:0007669"/>
    <property type="project" value="UniProtKB-SubCell"/>
</dbReference>
<dbReference type="GO" id="GO:0016757">
    <property type="term" value="F:glycosyltransferase activity"/>
    <property type="evidence" value="ECO:0007669"/>
    <property type="project" value="UniProtKB-KW"/>
</dbReference>
<dbReference type="GO" id="GO:0071555">
    <property type="term" value="P:cell wall organization"/>
    <property type="evidence" value="ECO:0007669"/>
    <property type="project" value="UniProtKB-KW"/>
</dbReference>
<dbReference type="GO" id="GO:0010417">
    <property type="term" value="P:glucuronoxylan biosynthetic process"/>
    <property type="evidence" value="ECO:0000318"/>
    <property type="project" value="GO_Central"/>
</dbReference>
<dbReference type="GO" id="GO:0006486">
    <property type="term" value="P:protein glycosylation"/>
    <property type="evidence" value="ECO:0007669"/>
    <property type="project" value="InterPro"/>
</dbReference>
<dbReference type="InterPro" id="IPR004263">
    <property type="entry name" value="Exostosin"/>
</dbReference>
<dbReference type="InterPro" id="IPR040911">
    <property type="entry name" value="Exostosin_GT47"/>
</dbReference>
<dbReference type="PANTHER" id="PTHR11062">
    <property type="entry name" value="EXOSTOSIN HEPARAN SULFATE GLYCOSYLTRANSFERASE -RELATED"/>
    <property type="match status" value="1"/>
</dbReference>
<dbReference type="PANTHER" id="PTHR11062:SF229">
    <property type="entry name" value="GLUCURONOXYLAN GLUCURONOSYLTRANSFERASE IRX7-RELATED"/>
    <property type="match status" value="1"/>
</dbReference>
<dbReference type="Pfam" id="PF03016">
    <property type="entry name" value="Exostosin_GT47"/>
    <property type="match status" value="1"/>
</dbReference>
<gene>
    <name type="ordered locus">Os03g0107900</name>
    <name type="ordered locus">LOC_Os03g01760</name>
    <name type="ORF">OsJ_09104</name>
</gene>
<protein>
    <recommendedName>
        <fullName>Probable glucuronosyltransferase Os03g0107900</fullName>
        <ecNumber>2.4.-.-</ecNumber>
    </recommendedName>
</protein>